<feature type="chain" id="PRO_0000345655" description="Cell division protein ZapA">
    <location>
        <begin position="1"/>
        <end position="109"/>
    </location>
</feature>
<feature type="coiled-coil region" evidence="1">
    <location>
        <begin position="21"/>
        <end position="97"/>
    </location>
</feature>
<keyword id="KW-0131">Cell cycle</keyword>
<keyword id="KW-0132">Cell division</keyword>
<keyword id="KW-0175">Coiled coil</keyword>
<keyword id="KW-0963">Cytoplasm</keyword>
<keyword id="KW-0717">Septation</keyword>
<dbReference type="EMBL" id="CP000026">
    <property type="protein sequence ID" value="AAV78769.1"/>
    <property type="molecule type" value="Genomic_DNA"/>
</dbReference>
<dbReference type="RefSeq" id="WP_001276011.1">
    <property type="nucleotide sequence ID" value="NC_006511.1"/>
</dbReference>
<dbReference type="SMR" id="Q5PJH4"/>
<dbReference type="GeneID" id="66757358"/>
<dbReference type="KEGG" id="spt:SPA2928"/>
<dbReference type="HOGENOM" id="CLU_116623_3_0_6"/>
<dbReference type="Proteomes" id="UP000008185">
    <property type="component" value="Chromosome"/>
</dbReference>
<dbReference type="GO" id="GO:0032153">
    <property type="term" value="C:cell division site"/>
    <property type="evidence" value="ECO:0007669"/>
    <property type="project" value="TreeGrafter"/>
</dbReference>
<dbReference type="GO" id="GO:0030428">
    <property type="term" value="C:cell septum"/>
    <property type="evidence" value="ECO:0007669"/>
    <property type="project" value="TreeGrafter"/>
</dbReference>
<dbReference type="GO" id="GO:0005829">
    <property type="term" value="C:cytosol"/>
    <property type="evidence" value="ECO:0007669"/>
    <property type="project" value="TreeGrafter"/>
</dbReference>
<dbReference type="GO" id="GO:0005886">
    <property type="term" value="C:plasma membrane"/>
    <property type="evidence" value="ECO:0007669"/>
    <property type="project" value="UniProtKB-UniRule"/>
</dbReference>
<dbReference type="GO" id="GO:0000917">
    <property type="term" value="P:division septum assembly"/>
    <property type="evidence" value="ECO:0007669"/>
    <property type="project" value="UniProtKB-KW"/>
</dbReference>
<dbReference type="GO" id="GO:0043093">
    <property type="term" value="P:FtsZ-dependent cytokinesis"/>
    <property type="evidence" value="ECO:0007669"/>
    <property type="project" value="TreeGrafter"/>
</dbReference>
<dbReference type="GO" id="GO:0000921">
    <property type="term" value="P:septin ring assembly"/>
    <property type="evidence" value="ECO:0007669"/>
    <property type="project" value="TreeGrafter"/>
</dbReference>
<dbReference type="FunFam" id="1.20.5.50:FF:000001">
    <property type="entry name" value="Cell division protein ZapA"/>
    <property type="match status" value="1"/>
</dbReference>
<dbReference type="FunFam" id="3.30.160.880:FF:000001">
    <property type="entry name" value="Cell division protein ZapA"/>
    <property type="match status" value="1"/>
</dbReference>
<dbReference type="Gene3D" id="1.20.5.50">
    <property type="match status" value="1"/>
</dbReference>
<dbReference type="Gene3D" id="3.30.160.880">
    <property type="entry name" value="Cell division protein ZapA protomer, N-terminal domain"/>
    <property type="match status" value="1"/>
</dbReference>
<dbReference type="HAMAP" id="MF_02012">
    <property type="entry name" value="ZapA_type1"/>
    <property type="match status" value="1"/>
</dbReference>
<dbReference type="InterPro" id="IPR007838">
    <property type="entry name" value="Cell_div_ZapA-like"/>
</dbReference>
<dbReference type="InterPro" id="IPR036192">
    <property type="entry name" value="Cell_div_ZapA-like_sf"/>
</dbReference>
<dbReference type="InterPro" id="IPR023771">
    <property type="entry name" value="Cell_div_ZapA_eubact"/>
</dbReference>
<dbReference type="InterPro" id="IPR042233">
    <property type="entry name" value="Cell_div_ZapA_N"/>
</dbReference>
<dbReference type="NCBIfam" id="NF008209">
    <property type="entry name" value="PRK10972.1"/>
    <property type="match status" value="1"/>
</dbReference>
<dbReference type="PANTHER" id="PTHR34981">
    <property type="entry name" value="CELL DIVISION PROTEIN ZAPA"/>
    <property type="match status" value="1"/>
</dbReference>
<dbReference type="PANTHER" id="PTHR34981:SF1">
    <property type="entry name" value="CELL DIVISION PROTEIN ZAPA"/>
    <property type="match status" value="1"/>
</dbReference>
<dbReference type="Pfam" id="PF05164">
    <property type="entry name" value="ZapA"/>
    <property type="match status" value="1"/>
</dbReference>
<dbReference type="SUPFAM" id="SSF102829">
    <property type="entry name" value="Cell division protein ZapA-like"/>
    <property type="match status" value="1"/>
</dbReference>
<name>ZAPA_SALPA</name>
<proteinExistence type="inferred from homology"/>
<gene>
    <name evidence="1" type="primary">zapA</name>
    <name type="ordered locus">SPA2928</name>
</gene>
<organism>
    <name type="scientific">Salmonella paratyphi A (strain ATCC 9150 / SARB42)</name>
    <dbReference type="NCBI Taxonomy" id="295319"/>
    <lineage>
        <taxon>Bacteria</taxon>
        <taxon>Pseudomonadati</taxon>
        <taxon>Pseudomonadota</taxon>
        <taxon>Gammaproteobacteria</taxon>
        <taxon>Enterobacterales</taxon>
        <taxon>Enterobacteriaceae</taxon>
        <taxon>Salmonella</taxon>
    </lineage>
</organism>
<comment type="function">
    <text evidence="1">Activator of cell division through the inhibition of FtsZ GTPase activity, therefore promoting FtsZ assembly into bundles of protofilaments necessary for the formation of the division Z ring. It is recruited early at mid-cell but it is not essential for cell division.</text>
</comment>
<comment type="subunit">
    <text evidence="1">Homodimer. Interacts with FtsZ.</text>
</comment>
<comment type="subcellular location">
    <subcellularLocation>
        <location evidence="1">Cytoplasm</location>
    </subcellularLocation>
    <text evidence="1">Localizes at mid-cell.</text>
</comment>
<comment type="similarity">
    <text evidence="1">Belongs to the ZapA family. Type 1 subfamily.</text>
</comment>
<protein>
    <recommendedName>
        <fullName evidence="1">Cell division protein ZapA</fullName>
    </recommendedName>
    <alternativeName>
        <fullName evidence="1">Z ring-associated protein ZapA</fullName>
    </alternativeName>
</protein>
<accession>Q5PJH4</accession>
<reference key="1">
    <citation type="journal article" date="2004" name="Nat. Genet.">
        <title>Comparison of genome degradation in Paratyphi A and Typhi, human-restricted serovars of Salmonella enterica that cause typhoid.</title>
        <authorList>
            <person name="McClelland M."/>
            <person name="Sanderson K.E."/>
            <person name="Clifton S.W."/>
            <person name="Latreille P."/>
            <person name="Porwollik S."/>
            <person name="Sabo A."/>
            <person name="Meyer R."/>
            <person name="Bieri T."/>
            <person name="Ozersky P."/>
            <person name="McLellan M."/>
            <person name="Harkins C.R."/>
            <person name="Wang C."/>
            <person name="Nguyen C."/>
            <person name="Berghoff A."/>
            <person name="Elliott G."/>
            <person name="Kohlberg S."/>
            <person name="Strong C."/>
            <person name="Du F."/>
            <person name="Carter J."/>
            <person name="Kremizki C."/>
            <person name="Layman D."/>
            <person name="Leonard S."/>
            <person name="Sun H."/>
            <person name="Fulton L."/>
            <person name="Nash W."/>
            <person name="Miner T."/>
            <person name="Minx P."/>
            <person name="Delehaunty K."/>
            <person name="Fronick C."/>
            <person name="Magrini V."/>
            <person name="Nhan M."/>
            <person name="Warren W."/>
            <person name="Florea L."/>
            <person name="Spieth J."/>
            <person name="Wilson R.K."/>
        </authorList>
    </citation>
    <scope>NUCLEOTIDE SEQUENCE [LARGE SCALE GENOMIC DNA]</scope>
    <source>
        <strain>ATCC 9150 / SARB42</strain>
    </source>
</reference>
<sequence length="109" mass="12523">MSAQPVDIQIFGRSLRVNCPPDQRDALNQAADDLNQRLQDLKVRTRVTNTEQLVFIAALNISYELTQEKAKTRDYAASMEQRIRMLQQTIEQALLDQGRITEKTGQNFE</sequence>
<evidence type="ECO:0000255" key="1">
    <source>
        <dbReference type="HAMAP-Rule" id="MF_02012"/>
    </source>
</evidence>